<gene>
    <name evidence="1" type="primary">rplP</name>
    <name type="ordered locus">LMOf2365_2598</name>
</gene>
<feature type="chain" id="PRO_0000062131" description="Large ribosomal subunit protein uL16">
    <location>
        <begin position="1"/>
        <end position="144"/>
    </location>
</feature>
<organism>
    <name type="scientific">Listeria monocytogenes serotype 4b (strain F2365)</name>
    <dbReference type="NCBI Taxonomy" id="265669"/>
    <lineage>
        <taxon>Bacteria</taxon>
        <taxon>Bacillati</taxon>
        <taxon>Bacillota</taxon>
        <taxon>Bacilli</taxon>
        <taxon>Bacillales</taxon>
        <taxon>Listeriaceae</taxon>
        <taxon>Listeria</taxon>
    </lineage>
</organism>
<sequence>MLVPKRVKYRREFRGNMRGRAKGGTEVAFGEYGLQAVEASWITNRQIEAARIAMTRYMKRGGKVWIKIFPHKSYTSKPIGVRMGKGKGAPEGWVSPVKRGKIMFEIAGVPEDVAREALRLAAHKLPVKTKIVKREEIGGEANES</sequence>
<comment type="function">
    <text evidence="1">Binds 23S rRNA and is also seen to make contacts with the A and possibly P site tRNAs.</text>
</comment>
<comment type="subunit">
    <text evidence="1">Part of the 50S ribosomal subunit.</text>
</comment>
<comment type="similarity">
    <text evidence="1">Belongs to the universal ribosomal protein uL16 family.</text>
</comment>
<dbReference type="EMBL" id="AE017262">
    <property type="protein sequence ID" value="AAT05363.1"/>
    <property type="molecule type" value="Genomic_DNA"/>
</dbReference>
<dbReference type="RefSeq" id="WP_003720943.1">
    <property type="nucleotide sequence ID" value="NC_002973.6"/>
</dbReference>
<dbReference type="SMR" id="Q71WF3"/>
<dbReference type="GeneID" id="93240506"/>
<dbReference type="KEGG" id="lmf:LMOf2365_2598"/>
<dbReference type="HOGENOM" id="CLU_078858_2_1_9"/>
<dbReference type="GO" id="GO:0022625">
    <property type="term" value="C:cytosolic large ribosomal subunit"/>
    <property type="evidence" value="ECO:0007669"/>
    <property type="project" value="TreeGrafter"/>
</dbReference>
<dbReference type="GO" id="GO:0019843">
    <property type="term" value="F:rRNA binding"/>
    <property type="evidence" value="ECO:0007669"/>
    <property type="project" value="UniProtKB-UniRule"/>
</dbReference>
<dbReference type="GO" id="GO:0003735">
    <property type="term" value="F:structural constituent of ribosome"/>
    <property type="evidence" value="ECO:0007669"/>
    <property type="project" value="InterPro"/>
</dbReference>
<dbReference type="GO" id="GO:0000049">
    <property type="term" value="F:tRNA binding"/>
    <property type="evidence" value="ECO:0007669"/>
    <property type="project" value="UniProtKB-KW"/>
</dbReference>
<dbReference type="GO" id="GO:0006412">
    <property type="term" value="P:translation"/>
    <property type="evidence" value="ECO:0007669"/>
    <property type="project" value="UniProtKB-UniRule"/>
</dbReference>
<dbReference type="CDD" id="cd01433">
    <property type="entry name" value="Ribosomal_L16_L10e"/>
    <property type="match status" value="1"/>
</dbReference>
<dbReference type="FunFam" id="3.90.1170.10:FF:000001">
    <property type="entry name" value="50S ribosomal protein L16"/>
    <property type="match status" value="1"/>
</dbReference>
<dbReference type="Gene3D" id="3.90.1170.10">
    <property type="entry name" value="Ribosomal protein L10e/L16"/>
    <property type="match status" value="1"/>
</dbReference>
<dbReference type="HAMAP" id="MF_01342">
    <property type="entry name" value="Ribosomal_uL16"/>
    <property type="match status" value="1"/>
</dbReference>
<dbReference type="InterPro" id="IPR047873">
    <property type="entry name" value="Ribosomal_uL16"/>
</dbReference>
<dbReference type="InterPro" id="IPR000114">
    <property type="entry name" value="Ribosomal_uL16_bact-type"/>
</dbReference>
<dbReference type="InterPro" id="IPR020798">
    <property type="entry name" value="Ribosomal_uL16_CS"/>
</dbReference>
<dbReference type="InterPro" id="IPR016180">
    <property type="entry name" value="Ribosomal_uL16_dom"/>
</dbReference>
<dbReference type="InterPro" id="IPR036920">
    <property type="entry name" value="Ribosomal_uL16_sf"/>
</dbReference>
<dbReference type="NCBIfam" id="TIGR01164">
    <property type="entry name" value="rplP_bact"/>
    <property type="match status" value="1"/>
</dbReference>
<dbReference type="PANTHER" id="PTHR12220">
    <property type="entry name" value="50S/60S RIBOSOMAL PROTEIN L16"/>
    <property type="match status" value="1"/>
</dbReference>
<dbReference type="PANTHER" id="PTHR12220:SF13">
    <property type="entry name" value="LARGE RIBOSOMAL SUBUNIT PROTEIN UL16M"/>
    <property type="match status" value="1"/>
</dbReference>
<dbReference type="Pfam" id="PF00252">
    <property type="entry name" value="Ribosomal_L16"/>
    <property type="match status" value="1"/>
</dbReference>
<dbReference type="PRINTS" id="PR00060">
    <property type="entry name" value="RIBOSOMALL16"/>
</dbReference>
<dbReference type="SUPFAM" id="SSF54686">
    <property type="entry name" value="Ribosomal protein L16p/L10e"/>
    <property type="match status" value="1"/>
</dbReference>
<dbReference type="PROSITE" id="PS00586">
    <property type="entry name" value="RIBOSOMAL_L16_1"/>
    <property type="match status" value="1"/>
</dbReference>
<dbReference type="PROSITE" id="PS00701">
    <property type="entry name" value="RIBOSOMAL_L16_2"/>
    <property type="match status" value="1"/>
</dbReference>
<evidence type="ECO:0000255" key="1">
    <source>
        <dbReference type="HAMAP-Rule" id="MF_01342"/>
    </source>
</evidence>
<evidence type="ECO:0000305" key="2"/>
<name>RL16_LISMF</name>
<keyword id="KW-0687">Ribonucleoprotein</keyword>
<keyword id="KW-0689">Ribosomal protein</keyword>
<keyword id="KW-0694">RNA-binding</keyword>
<keyword id="KW-0699">rRNA-binding</keyword>
<keyword id="KW-0820">tRNA-binding</keyword>
<accession>Q71WF3</accession>
<proteinExistence type="inferred from homology"/>
<reference key="1">
    <citation type="journal article" date="2004" name="Nucleic Acids Res.">
        <title>Whole genome comparisons of serotype 4b and 1/2a strains of the food-borne pathogen Listeria monocytogenes reveal new insights into the core genome components of this species.</title>
        <authorList>
            <person name="Nelson K.E."/>
            <person name="Fouts D.E."/>
            <person name="Mongodin E.F."/>
            <person name="Ravel J."/>
            <person name="DeBoy R.T."/>
            <person name="Kolonay J.F."/>
            <person name="Rasko D.A."/>
            <person name="Angiuoli S.V."/>
            <person name="Gill S.R."/>
            <person name="Paulsen I.T."/>
            <person name="Peterson J.D."/>
            <person name="White O."/>
            <person name="Nelson W.C."/>
            <person name="Nierman W.C."/>
            <person name="Beanan M.J."/>
            <person name="Brinkac L.M."/>
            <person name="Daugherty S.C."/>
            <person name="Dodson R.J."/>
            <person name="Durkin A.S."/>
            <person name="Madupu R."/>
            <person name="Haft D.H."/>
            <person name="Selengut J."/>
            <person name="Van Aken S.E."/>
            <person name="Khouri H.M."/>
            <person name="Fedorova N."/>
            <person name="Forberger H.A."/>
            <person name="Tran B."/>
            <person name="Kathariou S."/>
            <person name="Wonderling L.D."/>
            <person name="Uhlich G.A."/>
            <person name="Bayles D.O."/>
            <person name="Luchansky J.B."/>
            <person name="Fraser C.M."/>
        </authorList>
    </citation>
    <scope>NUCLEOTIDE SEQUENCE [LARGE SCALE GENOMIC DNA]</scope>
    <source>
        <strain>F2365</strain>
    </source>
</reference>
<protein>
    <recommendedName>
        <fullName evidence="1">Large ribosomal subunit protein uL16</fullName>
    </recommendedName>
    <alternativeName>
        <fullName evidence="2">50S ribosomal protein L16</fullName>
    </alternativeName>
</protein>